<evidence type="ECO:0000250" key="1"/>
<evidence type="ECO:0000255" key="2"/>
<evidence type="ECO:0000305" key="3"/>
<dbReference type="EMBL" id="AE014075">
    <property type="protein sequence ID" value="AAN82443.1"/>
    <property type="molecule type" value="Genomic_DNA"/>
</dbReference>
<dbReference type="RefSeq" id="WP_000179409.1">
    <property type="nucleotide sequence ID" value="NZ_CP051263.1"/>
</dbReference>
<dbReference type="SMR" id="P0ABH5"/>
<dbReference type="STRING" id="199310.c4003"/>
<dbReference type="GeneID" id="93778737"/>
<dbReference type="KEGG" id="ecc:c4003"/>
<dbReference type="eggNOG" id="COG2891">
    <property type="taxonomic scope" value="Bacteria"/>
</dbReference>
<dbReference type="HOGENOM" id="CLU_119315_0_1_6"/>
<dbReference type="BioCyc" id="ECOL199310:C4003-MONOMER"/>
<dbReference type="Proteomes" id="UP000001410">
    <property type="component" value="Chromosome"/>
</dbReference>
<dbReference type="GO" id="GO:0005886">
    <property type="term" value="C:plasma membrane"/>
    <property type="evidence" value="ECO:0007669"/>
    <property type="project" value="UniProtKB-SubCell"/>
</dbReference>
<dbReference type="GO" id="GO:0008360">
    <property type="term" value="P:regulation of cell shape"/>
    <property type="evidence" value="ECO:0007669"/>
    <property type="project" value="UniProtKB-KW"/>
</dbReference>
<dbReference type="InterPro" id="IPR007227">
    <property type="entry name" value="Cell_shape_determining_MreD"/>
</dbReference>
<dbReference type="InterPro" id="IPR026034">
    <property type="entry name" value="MreD_proteobac"/>
</dbReference>
<dbReference type="NCBIfam" id="NF008282">
    <property type="entry name" value="PRK11060.1"/>
    <property type="match status" value="1"/>
</dbReference>
<dbReference type="NCBIfam" id="TIGR03426">
    <property type="entry name" value="shape_MreD"/>
    <property type="match status" value="1"/>
</dbReference>
<dbReference type="PANTHER" id="PTHR37484">
    <property type="entry name" value="ROD SHAPE-DETERMINING PROTEIN MRED"/>
    <property type="match status" value="1"/>
</dbReference>
<dbReference type="PANTHER" id="PTHR37484:SF1">
    <property type="entry name" value="ROD SHAPE-DETERMINING PROTEIN MRED"/>
    <property type="match status" value="1"/>
</dbReference>
<dbReference type="Pfam" id="PF04093">
    <property type="entry name" value="MreD"/>
    <property type="match status" value="1"/>
</dbReference>
<dbReference type="PIRSF" id="PIRSF018472">
    <property type="entry name" value="MreD_proteobac"/>
    <property type="match status" value="1"/>
</dbReference>
<comment type="function">
    <text evidence="1">Involved in formation of the rod shape of the cell. May also contribute to regulation of formation of penicillin-binding proteins (By similarity).</text>
</comment>
<comment type="subcellular location">
    <subcellularLocation>
        <location evidence="1">Cell inner membrane</location>
        <topology evidence="1">Multi-pass membrane protein</topology>
    </subcellularLocation>
</comment>
<comment type="similarity">
    <text evidence="3">Belongs to the MreD family.</text>
</comment>
<organism>
    <name type="scientific">Escherichia coli O6:H1 (strain CFT073 / ATCC 700928 / UPEC)</name>
    <dbReference type="NCBI Taxonomy" id="199310"/>
    <lineage>
        <taxon>Bacteria</taxon>
        <taxon>Pseudomonadati</taxon>
        <taxon>Pseudomonadota</taxon>
        <taxon>Gammaproteobacteria</taxon>
        <taxon>Enterobacterales</taxon>
        <taxon>Enterobacteriaceae</taxon>
        <taxon>Escherichia</taxon>
    </lineage>
</organism>
<reference key="1">
    <citation type="journal article" date="2002" name="Proc. Natl. Acad. Sci. U.S.A.">
        <title>Extensive mosaic structure revealed by the complete genome sequence of uropathogenic Escherichia coli.</title>
        <authorList>
            <person name="Welch R.A."/>
            <person name="Burland V."/>
            <person name="Plunkett G. III"/>
            <person name="Redford P."/>
            <person name="Roesch P."/>
            <person name="Rasko D."/>
            <person name="Buckles E.L."/>
            <person name="Liou S.-R."/>
            <person name="Boutin A."/>
            <person name="Hackett J."/>
            <person name="Stroud D."/>
            <person name="Mayhew G.F."/>
            <person name="Rose D.J."/>
            <person name="Zhou S."/>
            <person name="Schwartz D.C."/>
            <person name="Perna N.T."/>
            <person name="Mobley H.L.T."/>
            <person name="Donnenberg M.S."/>
            <person name="Blattner F.R."/>
        </authorList>
    </citation>
    <scope>NUCLEOTIDE SEQUENCE [LARGE SCALE GENOMIC DNA]</scope>
    <source>
        <strain>CFT073 / ATCC 700928 / UPEC</strain>
    </source>
</reference>
<feature type="chain" id="PRO_0000062772" description="Rod shape-determining protein MreD">
    <location>
        <begin position="1"/>
        <end position="162"/>
    </location>
</feature>
<feature type="topological domain" description="Periplasmic" evidence="2">
    <location>
        <begin position="1"/>
        <end position="9"/>
    </location>
</feature>
<feature type="transmembrane region" description="Helical" evidence="2">
    <location>
        <begin position="10"/>
        <end position="30"/>
    </location>
</feature>
<feature type="transmembrane region" description="Helical" evidence="2">
    <location>
        <begin position="31"/>
        <end position="51"/>
    </location>
</feature>
<feature type="topological domain" description="Periplasmic" evidence="2">
    <location>
        <begin position="52"/>
        <end position="55"/>
    </location>
</feature>
<feature type="transmembrane region" description="Helical" evidence="2">
    <location>
        <begin position="56"/>
        <end position="76"/>
    </location>
</feature>
<feature type="topological domain" description="Cytoplasmic" evidence="2">
    <location>
        <begin position="77"/>
        <end position="105"/>
    </location>
</feature>
<feature type="transmembrane region" description="Helical" evidence="2">
    <location>
        <begin position="106"/>
        <end position="126"/>
    </location>
</feature>
<feature type="topological domain" description="Periplasmic" evidence="2">
    <location>
        <begin position="127"/>
        <end position="131"/>
    </location>
</feature>
<feature type="transmembrane region" description="Helical" evidence="2">
    <location>
        <begin position="132"/>
        <end position="152"/>
    </location>
</feature>
<feature type="topological domain" description="Cytoplasmic" evidence="2">
    <location>
        <begin position="153"/>
        <end position="162"/>
    </location>
</feature>
<keyword id="KW-0997">Cell inner membrane</keyword>
<keyword id="KW-1003">Cell membrane</keyword>
<keyword id="KW-0133">Cell shape</keyword>
<keyword id="KW-0472">Membrane</keyword>
<keyword id="KW-1185">Reference proteome</keyword>
<keyword id="KW-0812">Transmembrane</keyword>
<keyword id="KW-1133">Transmembrane helix</keyword>
<name>MRED_ECOL6</name>
<accession>P0ABH5</accession>
<accession>P16927</accession>
<gene>
    <name type="primary">mreD</name>
    <name type="ordered locus">c4003</name>
</gene>
<protein>
    <recommendedName>
        <fullName>Rod shape-determining protein MreD</fullName>
    </recommendedName>
</protein>
<proteinExistence type="inferred from homology"/>
<sequence length="162" mass="18788">MASYRSQGRWVIWLSFLIALLLQIMPWPDNLIVFRPNWVLLILLYWILALPHRVNVGTGFVMGAILDLISGSTLGVRVLAMSIIAYLVALKYQLFRNLALWQQALVVMLLSLVVDIIVFWAEFLVINVSFRPEVFWSSVVNGVLWPWIFLLMRKVRQQFAVQ</sequence>